<dbReference type="EC" id="3.1.-.-" evidence="1"/>
<dbReference type="EMBL" id="CP000419">
    <property type="protein sequence ID" value="ABJ67048.1"/>
    <property type="molecule type" value="Genomic_DNA"/>
</dbReference>
<dbReference type="SMR" id="Q03IC4"/>
<dbReference type="KEGG" id="ste:STER_1938"/>
<dbReference type="HOGENOM" id="CLU_098240_2_0_9"/>
<dbReference type="GO" id="GO:0005829">
    <property type="term" value="C:cytosol"/>
    <property type="evidence" value="ECO:0007669"/>
    <property type="project" value="TreeGrafter"/>
</dbReference>
<dbReference type="GO" id="GO:0004518">
    <property type="term" value="F:nuclease activity"/>
    <property type="evidence" value="ECO:0007669"/>
    <property type="project" value="UniProtKB-KW"/>
</dbReference>
<dbReference type="GO" id="GO:0000967">
    <property type="term" value="P:rRNA 5'-end processing"/>
    <property type="evidence" value="ECO:0007669"/>
    <property type="project" value="UniProtKB-UniRule"/>
</dbReference>
<dbReference type="CDD" id="cd16964">
    <property type="entry name" value="YqgF"/>
    <property type="match status" value="1"/>
</dbReference>
<dbReference type="FunFam" id="3.30.420.140:FF:000003">
    <property type="entry name" value="Putative pre-16S rRNA nuclease"/>
    <property type="match status" value="1"/>
</dbReference>
<dbReference type="Gene3D" id="3.30.420.140">
    <property type="entry name" value="YqgF/RNase H-like domain"/>
    <property type="match status" value="1"/>
</dbReference>
<dbReference type="HAMAP" id="MF_00651">
    <property type="entry name" value="Nuclease_YqgF"/>
    <property type="match status" value="1"/>
</dbReference>
<dbReference type="InterPro" id="IPR012337">
    <property type="entry name" value="RNaseH-like_sf"/>
</dbReference>
<dbReference type="InterPro" id="IPR005227">
    <property type="entry name" value="YqgF"/>
</dbReference>
<dbReference type="InterPro" id="IPR006641">
    <property type="entry name" value="YqgF/RNaseH-like_dom"/>
</dbReference>
<dbReference type="InterPro" id="IPR037027">
    <property type="entry name" value="YqgF/RNaseH-like_dom_sf"/>
</dbReference>
<dbReference type="NCBIfam" id="TIGR00250">
    <property type="entry name" value="RNAse_H_YqgF"/>
    <property type="match status" value="1"/>
</dbReference>
<dbReference type="PANTHER" id="PTHR33317">
    <property type="entry name" value="POLYNUCLEOTIDYL TRANSFERASE, RIBONUCLEASE H-LIKE SUPERFAMILY PROTEIN"/>
    <property type="match status" value="1"/>
</dbReference>
<dbReference type="PANTHER" id="PTHR33317:SF4">
    <property type="entry name" value="POLYNUCLEOTIDYL TRANSFERASE, RIBONUCLEASE H-LIKE SUPERFAMILY PROTEIN"/>
    <property type="match status" value="1"/>
</dbReference>
<dbReference type="Pfam" id="PF03652">
    <property type="entry name" value="RuvX"/>
    <property type="match status" value="1"/>
</dbReference>
<dbReference type="SMART" id="SM00732">
    <property type="entry name" value="YqgFc"/>
    <property type="match status" value="1"/>
</dbReference>
<dbReference type="SUPFAM" id="SSF53098">
    <property type="entry name" value="Ribonuclease H-like"/>
    <property type="match status" value="1"/>
</dbReference>
<reference key="1">
    <citation type="journal article" date="2006" name="Proc. Natl. Acad. Sci. U.S.A.">
        <title>Comparative genomics of the lactic acid bacteria.</title>
        <authorList>
            <person name="Makarova K.S."/>
            <person name="Slesarev A."/>
            <person name="Wolf Y.I."/>
            <person name="Sorokin A."/>
            <person name="Mirkin B."/>
            <person name="Koonin E.V."/>
            <person name="Pavlov A."/>
            <person name="Pavlova N."/>
            <person name="Karamychev V."/>
            <person name="Polouchine N."/>
            <person name="Shakhova V."/>
            <person name="Grigoriev I."/>
            <person name="Lou Y."/>
            <person name="Rohksar D."/>
            <person name="Lucas S."/>
            <person name="Huang K."/>
            <person name="Goodstein D.M."/>
            <person name="Hawkins T."/>
            <person name="Plengvidhya V."/>
            <person name="Welker D."/>
            <person name="Hughes J."/>
            <person name="Goh Y."/>
            <person name="Benson A."/>
            <person name="Baldwin K."/>
            <person name="Lee J.-H."/>
            <person name="Diaz-Muniz I."/>
            <person name="Dosti B."/>
            <person name="Smeianov V."/>
            <person name="Wechter W."/>
            <person name="Barabote R."/>
            <person name="Lorca G."/>
            <person name="Altermann E."/>
            <person name="Barrangou R."/>
            <person name="Ganesan B."/>
            <person name="Xie Y."/>
            <person name="Rawsthorne H."/>
            <person name="Tamir D."/>
            <person name="Parker C."/>
            <person name="Breidt F."/>
            <person name="Broadbent J.R."/>
            <person name="Hutkins R."/>
            <person name="O'Sullivan D."/>
            <person name="Steele J."/>
            <person name="Unlu G."/>
            <person name="Saier M.H. Jr."/>
            <person name="Klaenhammer T."/>
            <person name="Richardson P."/>
            <person name="Kozyavkin S."/>
            <person name="Weimer B.C."/>
            <person name="Mills D.A."/>
        </authorList>
    </citation>
    <scope>NUCLEOTIDE SEQUENCE [LARGE SCALE GENOMIC DNA]</scope>
    <source>
        <strain>ATCC BAA-491 / LMD-9</strain>
    </source>
</reference>
<sequence length="139" mass="15725">MRVMGLDVGSKTVGVAISDPLGFTAQGVEIIKINEEAKEFGFDRLGELVKEYQVDKFVVGLPKNMNNTEGPRVEASKAYGDKIKEIFNLPVDYQDERLTTVQAERMLVEQADVSRDKRKKVIDKLAAQLILQNYLDRMF</sequence>
<accession>Q03IC4</accession>
<comment type="function">
    <text evidence="1">Could be a nuclease involved in processing of the 5'-end of pre-16S rRNA.</text>
</comment>
<comment type="subcellular location">
    <subcellularLocation>
        <location evidence="1">Cytoplasm</location>
    </subcellularLocation>
</comment>
<comment type="similarity">
    <text evidence="1">Belongs to the YqgF nuclease family.</text>
</comment>
<protein>
    <recommendedName>
        <fullName evidence="1">Putative pre-16S rRNA nuclease</fullName>
        <ecNumber evidence="1">3.1.-.-</ecNumber>
    </recommendedName>
</protein>
<evidence type="ECO:0000255" key="1">
    <source>
        <dbReference type="HAMAP-Rule" id="MF_00651"/>
    </source>
</evidence>
<feature type="chain" id="PRO_1000061575" description="Putative pre-16S rRNA nuclease">
    <location>
        <begin position="1"/>
        <end position="139"/>
    </location>
</feature>
<keyword id="KW-0963">Cytoplasm</keyword>
<keyword id="KW-0378">Hydrolase</keyword>
<keyword id="KW-0540">Nuclease</keyword>
<keyword id="KW-0690">Ribosome biogenesis</keyword>
<gene>
    <name type="ordered locus">STER_1938</name>
</gene>
<name>YQGF_STRTD</name>
<organism>
    <name type="scientific">Streptococcus thermophilus (strain ATCC BAA-491 / LMD-9)</name>
    <dbReference type="NCBI Taxonomy" id="322159"/>
    <lineage>
        <taxon>Bacteria</taxon>
        <taxon>Bacillati</taxon>
        <taxon>Bacillota</taxon>
        <taxon>Bacilli</taxon>
        <taxon>Lactobacillales</taxon>
        <taxon>Streptococcaceae</taxon>
        <taxon>Streptococcus</taxon>
    </lineage>
</organism>
<proteinExistence type="inferred from homology"/>